<accession>Q9D8X1</accession>
<sequence length="272" mass="29004">MKKGASCERKQAWISSGKAGAGNGFLMEVCVDSVESAVNAERGGAGRIELCSGLLEGGTTPSMGVLQVVKQSVQIPVFVMIRPRGGDFLYSDREVEVMKADIRLAKLYGADGLVFGALTEDGHIDKELCLSLVALCRPLPVTFHRAFDMVHDPMAALETLLTLGFERVLTSGCDSSALEGLPLIKQLIDQAKGRIVVMPGGGITDKNLQRILEGSGATEFHCSARSSRDSGMKFRNSSVAMGASLAHSEYSLKVTDVTKVRTLNAIAKDVLV</sequence>
<reference key="1">
    <citation type="journal article" date="2005" name="Science">
        <title>The transcriptional landscape of the mammalian genome.</title>
        <authorList>
            <person name="Carninci P."/>
            <person name="Kasukawa T."/>
            <person name="Katayama S."/>
            <person name="Gough J."/>
            <person name="Frith M.C."/>
            <person name="Maeda N."/>
            <person name="Oyama R."/>
            <person name="Ravasi T."/>
            <person name="Lenhard B."/>
            <person name="Wells C."/>
            <person name="Kodzius R."/>
            <person name="Shimokawa K."/>
            <person name="Bajic V.B."/>
            <person name="Brenner S.E."/>
            <person name="Batalov S."/>
            <person name="Forrest A.R."/>
            <person name="Zavolan M."/>
            <person name="Davis M.J."/>
            <person name="Wilming L.G."/>
            <person name="Aidinis V."/>
            <person name="Allen J.E."/>
            <person name="Ambesi-Impiombato A."/>
            <person name="Apweiler R."/>
            <person name="Aturaliya R.N."/>
            <person name="Bailey T.L."/>
            <person name="Bansal M."/>
            <person name="Baxter L."/>
            <person name="Beisel K.W."/>
            <person name="Bersano T."/>
            <person name="Bono H."/>
            <person name="Chalk A.M."/>
            <person name="Chiu K.P."/>
            <person name="Choudhary V."/>
            <person name="Christoffels A."/>
            <person name="Clutterbuck D.R."/>
            <person name="Crowe M.L."/>
            <person name="Dalla E."/>
            <person name="Dalrymple B.P."/>
            <person name="de Bono B."/>
            <person name="Della Gatta G."/>
            <person name="di Bernardo D."/>
            <person name="Down T."/>
            <person name="Engstrom P."/>
            <person name="Fagiolini M."/>
            <person name="Faulkner G."/>
            <person name="Fletcher C.F."/>
            <person name="Fukushima T."/>
            <person name="Furuno M."/>
            <person name="Futaki S."/>
            <person name="Gariboldi M."/>
            <person name="Georgii-Hemming P."/>
            <person name="Gingeras T.R."/>
            <person name="Gojobori T."/>
            <person name="Green R.E."/>
            <person name="Gustincich S."/>
            <person name="Harbers M."/>
            <person name="Hayashi Y."/>
            <person name="Hensch T.K."/>
            <person name="Hirokawa N."/>
            <person name="Hill D."/>
            <person name="Huminiecki L."/>
            <person name="Iacono M."/>
            <person name="Ikeo K."/>
            <person name="Iwama A."/>
            <person name="Ishikawa T."/>
            <person name="Jakt M."/>
            <person name="Kanapin A."/>
            <person name="Katoh M."/>
            <person name="Kawasawa Y."/>
            <person name="Kelso J."/>
            <person name="Kitamura H."/>
            <person name="Kitano H."/>
            <person name="Kollias G."/>
            <person name="Krishnan S.P."/>
            <person name="Kruger A."/>
            <person name="Kummerfeld S.K."/>
            <person name="Kurochkin I.V."/>
            <person name="Lareau L.F."/>
            <person name="Lazarevic D."/>
            <person name="Lipovich L."/>
            <person name="Liu J."/>
            <person name="Liuni S."/>
            <person name="McWilliam S."/>
            <person name="Madan Babu M."/>
            <person name="Madera M."/>
            <person name="Marchionni L."/>
            <person name="Matsuda H."/>
            <person name="Matsuzawa S."/>
            <person name="Miki H."/>
            <person name="Mignone F."/>
            <person name="Miyake S."/>
            <person name="Morris K."/>
            <person name="Mottagui-Tabar S."/>
            <person name="Mulder N."/>
            <person name="Nakano N."/>
            <person name="Nakauchi H."/>
            <person name="Ng P."/>
            <person name="Nilsson R."/>
            <person name="Nishiguchi S."/>
            <person name="Nishikawa S."/>
            <person name="Nori F."/>
            <person name="Ohara O."/>
            <person name="Okazaki Y."/>
            <person name="Orlando V."/>
            <person name="Pang K.C."/>
            <person name="Pavan W.J."/>
            <person name="Pavesi G."/>
            <person name="Pesole G."/>
            <person name="Petrovsky N."/>
            <person name="Piazza S."/>
            <person name="Reed J."/>
            <person name="Reid J.F."/>
            <person name="Ring B.Z."/>
            <person name="Ringwald M."/>
            <person name="Rost B."/>
            <person name="Ruan Y."/>
            <person name="Salzberg S.L."/>
            <person name="Sandelin A."/>
            <person name="Schneider C."/>
            <person name="Schoenbach C."/>
            <person name="Sekiguchi K."/>
            <person name="Semple C.A."/>
            <person name="Seno S."/>
            <person name="Sessa L."/>
            <person name="Sheng Y."/>
            <person name="Shibata Y."/>
            <person name="Shimada H."/>
            <person name="Shimada K."/>
            <person name="Silva D."/>
            <person name="Sinclair B."/>
            <person name="Sperling S."/>
            <person name="Stupka E."/>
            <person name="Sugiura K."/>
            <person name="Sultana R."/>
            <person name="Takenaka Y."/>
            <person name="Taki K."/>
            <person name="Tammoja K."/>
            <person name="Tan S.L."/>
            <person name="Tang S."/>
            <person name="Taylor M.S."/>
            <person name="Tegner J."/>
            <person name="Teichmann S.A."/>
            <person name="Ueda H.R."/>
            <person name="van Nimwegen E."/>
            <person name="Verardo R."/>
            <person name="Wei C.L."/>
            <person name="Yagi K."/>
            <person name="Yamanishi H."/>
            <person name="Zabarovsky E."/>
            <person name="Zhu S."/>
            <person name="Zimmer A."/>
            <person name="Hide W."/>
            <person name="Bult C."/>
            <person name="Grimmond S.M."/>
            <person name="Teasdale R.D."/>
            <person name="Liu E.T."/>
            <person name="Brusic V."/>
            <person name="Quackenbush J."/>
            <person name="Wahlestedt C."/>
            <person name="Mattick J.S."/>
            <person name="Hume D.A."/>
            <person name="Kai C."/>
            <person name="Sasaki D."/>
            <person name="Tomaru Y."/>
            <person name="Fukuda S."/>
            <person name="Kanamori-Katayama M."/>
            <person name="Suzuki M."/>
            <person name="Aoki J."/>
            <person name="Arakawa T."/>
            <person name="Iida J."/>
            <person name="Imamura K."/>
            <person name="Itoh M."/>
            <person name="Kato T."/>
            <person name="Kawaji H."/>
            <person name="Kawagashira N."/>
            <person name="Kawashima T."/>
            <person name="Kojima M."/>
            <person name="Kondo S."/>
            <person name="Konno H."/>
            <person name="Nakano K."/>
            <person name="Ninomiya N."/>
            <person name="Nishio T."/>
            <person name="Okada M."/>
            <person name="Plessy C."/>
            <person name="Shibata K."/>
            <person name="Shiraki T."/>
            <person name="Suzuki S."/>
            <person name="Tagami M."/>
            <person name="Waki K."/>
            <person name="Watahiki A."/>
            <person name="Okamura-Oho Y."/>
            <person name="Suzuki H."/>
            <person name="Kawai J."/>
            <person name="Hayashizaki Y."/>
        </authorList>
    </citation>
    <scope>NUCLEOTIDE SEQUENCE [LARGE SCALE MRNA]</scope>
    <source>
        <strain>C57BL/6J</strain>
        <tissue>Pancreas</tissue>
    </source>
</reference>
<reference key="2">
    <citation type="journal article" date="2004" name="Genome Res.">
        <title>The status, quality, and expansion of the NIH full-length cDNA project: the Mammalian Gene Collection (MGC).</title>
        <authorList>
            <consortium name="The MGC Project Team"/>
        </authorList>
    </citation>
    <scope>NUCLEOTIDE SEQUENCE [LARGE SCALE MRNA]</scope>
    <source>
        <strain>FVB/N</strain>
        <tissue>Mammary tumor</tissue>
    </source>
</reference>
<reference key="3">
    <citation type="journal article" date="2010" name="Cell">
        <title>A tissue-specific atlas of mouse protein phosphorylation and expression.</title>
        <authorList>
            <person name="Huttlin E.L."/>
            <person name="Jedrychowski M.P."/>
            <person name="Elias J.E."/>
            <person name="Goswami T."/>
            <person name="Rad R."/>
            <person name="Beausoleil S.A."/>
            <person name="Villen J."/>
            <person name="Haas W."/>
            <person name="Sowa M.E."/>
            <person name="Gygi S.P."/>
        </authorList>
    </citation>
    <scope>IDENTIFICATION BY MASS SPECTROMETRY [LARGE SCALE ANALYSIS]</scope>
    <source>
        <tissue>Brain</tissue>
        <tissue>Brown adipose tissue</tissue>
        <tissue>Heart</tissue>
        <tissue>Kidney</tissue>
        <tissue>Liver</tissue>
        <tissue>Pancreas</tissue>
        <tissue>Spleen</tissue>
        <tissue>Testis</tissue>
    </source>
</reference>
<protein>
    <recommendedName>
        <fullName>Copper homeostasis protein cutC homolog</fullName>
    </recommendedName>
</protein>
<feature type="chain" id="PRO_0000215089" description="Copper homeostasis protein cutC homolog">
    <location>
        <begin position="1"/>
        <end position="272"/>
    </location>
</feature>
<keyword id="KW-0186">Copper</keyword>
<keyword id="KW-0963">Cytoplasm</keyword>
<keyword id="KW-0479">Metal-binding</keyword>
<keyword id="KW-0539">Nucleus</keyword>
<keyword id="KW-1185">Reference proteome</keyword>
<name>CUTC_MOUSE</name>
<proteinExistence type="evidence at protein level"/>
<organism>
    <name type="scientific">Mus musculus</name>
    <name type="common">Mouse</name>
    <dbReference type="NCBI Taxonomy" id="10090"/>
    <lineage>
        <taxon>Eukaryota</taxon>
        <taxon>Metazoa</taxon>
        <taxon>Chordata</taxon>
        <taxon>Craniata</taxon>
        <taxon>Vertebrata</taxon>
        <taxon>Euteleostomi</taxon>
        <taxon>Mammalia</taxon>
        <taxon>Eutheria</taxon>
        <taxon>Euarchontoglires</taxon>
        <taxon>Glires</taxon>
        <taxon>Rodentia</taxon>
        <taxon>Myomorpha</taxon>
        <taxon>Muroidea</taxon>
        <taxon>Muridae</taxon>
        <taxon>Murinae</taxon>
        <taxon>Mus</taxon>
        <taxon>Mus</taxon>
    </lineage>
</organism>
<evidence type="ECO:0000250" key="1"/>
<evidence type="ECO:0000305" key="2"/>
<gene>
    <name type="primary">Cutc</name>
</gene>
<comment type="function">
    <text evidence="1">May play a role in copper homeostasis. Can bind one Cu(1+) per subunit (By similarity).</text>
</comment>
<comment type="subunit">
    <text evidence="1">Homotetramer.</text>
</comment>
<comment type="subcellular location">
    <subcellularLocation>
        <location evidence="1">Cytoplasm</location>
    </subcellularLocation>
    <subcellularLocation>
        <location evidence="1">Nucleus</location>
    </subcellularLocation>
</comment>
<comment type="similarity">
    <text evidence="2">Belongs to the CutC family.</text>
</comment>
<dbReference type="EMBL" id="AK007591">
    <property type="protein sequence ID" value="BAB25124.1"/>
    <property type="molecule type" value="mRNA"/>
</dbReference>
<dbReference type="EMBL" id="BC026775">
    <property type="protein sequence ID" value="AAH26775.1"/>
    <property type="molecule type" value="mRNA"/>
</dbReference>
<dbReference type="CCDS" id="CCDS50443.1"/>
<dbReference type="RefSeq" id="NP_001107034.1">
    <property type="nucleotide sequence ID" value="NM_001113562.1"/>
</dbReference>
<dbReference type="SMR" id="Q9D8X1"/>
<dbReference type="BioGRID" id="211434">
    <property type="interactions" value="7"/>
</dbReference>
<dbReference type="FunCoup" id="Q9D8X1">
    <property type="interactions" value="1508"/>
</dbReference>
<dbReference type="IntAct" id="Q9D8X1">
    <property type="interactions" value="1"/>
</dbReference>
<dbReference type="STRING" id="10090.ENSMUSP00000107678"/>
<dbReference type="iPTMnet" id="Q9D8X1"/>
<dbReference type="PhosphoSitePlus" id="Q9D8X1"/>
<dbReference type="SwissPalm" id="Q9D8X1"/>
<dbReference type="jPOST" id="Q9D8X1"/>
<dbReference type="PaxDb" id="10090-ENSMUSP00000107678"/>
<dbReference type="PeptideAtlas" id="Q9D8X1"/>
<dbReference type="ProteomicsDB" id="279302"/>
<dbReference type="Pumba" id="Q9D8X1"/>
<dbReference type="Antibodypedia" id="31094">
    <property type="antibodies" value="189 antibodies from 22 providers"/>
</dbReference>
<dbReference type="DNASU" id="66388"/>
<dbReference type="Ensembl" id="ENSMUST00000112047.10">
    <property type="protein sequence ID" value="ENSMUSP00000107678.4"/>
    <property type="gene ID" value="ENSMUSG00000025193.15"/>
</dbReference>
<dbReference type="GeneID" id="66388"/>
<dbReference type="KEGG" id="mmu:66388"/>
<dbReference type="UCSC" id="uc008hov.2">
    <property type="organism name" value="mouse"/>
</dbReference>
<dbReference type="AGR" id="MGI:1913638"/>
<dbReference type="CTD" id="51076"/>
<dbReference type="MGI" id="MGI:1913638">
    <property type="gene designation" value="Cutc"/>
</dbReference>
<dbReference type="VEuPathDB" id="HostDB:ENSMUSG00000025193"/>
<dbReference type="eggNOG" id="KOG4013">
    <property type="taxonomic scope" value="Eukaryota"/>
</dbReference>
<dbReference type="GeneTree" id="ENSGT00390000008454"/>
<dbReference type="InParanoid" id="Q9D8X1"/>
<dbReference type="OMA" id="HRAFDQC"/>
<dbReference type="OrthoDB" id="7392499at2759"/>
<dbReference type="PhylomeDB" id="Q9D8X1"/>
<dbReference type="TreeFam" id="TF105937"/>
<dbReference type="BioGRID-ORCS" id="66388">
    <property type="hits" value="4 hits in 75 CRISPR screens"/>
</dbReference>
<dbReference type="ChiTaRS" id="Cutc">
    <property type="organism name" value="mouse"/>
</dbReference>
<dbReference type="PRO" id="PR:Q9D8X1"/>
<dbReference type="Proteomes" id="UP000000589">
    <property type="component" value="Chromosome 19"/>
</dbReference>
<dbReference type="RNAct" id="Q9D8X1">
    <property type="molecule type" value="protein"/>
</dbReference>
<dbReference type="Bgee" id="ENSMUSG00000025193">
    <property type="expression patterns" value="Expressed in spermatid and 219 other cell types or tissues"/>
</dbReference>
<dbReference type="ExpressionAtlas" id="Q9D8X1">
    <property type="expression patterns" value="baseline and differential"/>
</dbReference>
<dbReference type="GO" id="GO:0005829">
    <property type="term" value="C:cytosol"/>
    <property type="evidence" value="ECO:0007669"/>
    <property type="project" value="Ensembl"/>
</dbReference>
<dbReference type="GO" id="GO:0005730">
    <property type="term" value="C:nucleolus"/>
    <property type="evidence" value="ECO:0007669"/>
    <property type="project" value="Ensembl"/>
</dbReference>
<dbReference type="GO" id="GO:0005654">
    <property type="term" value="C:nucleoplasm"/>
    <property type="evidence" value="ECO:0007669"/>
    <property type="project" value="Ensembl"/>
</dbReference>
<dbReference type="GO" id="GO:0005507">
    <property type="term" value="F:copper ion binding"/>
    <property type="evidence" value="ECO:0000250"/>
    <property type="project" value="UniProtKB"/>
</dbReference>
<dbReference type="GO" id="GO:0051262">
    <property type="term" value="P:protein tetramerization"/>
    <property type="evidence" value="ECO:0007669"/>
    <property type="project" value="Ensembl"/>
</dbReference>
<dbReference type="FunFam" id="3.20.20.380:FF:000002">
    <property type="entry name" value="copper homeostasis protein cutC homolog"/>
    <property type="match status" value="1"/>
</dbReference>
<dbReference type="Gene3D" id="3.20.20.380">
    <property type="entry name" value="Copper homeostasis (CutC) domain"/>
    <property type="match status" value="1"/>
</dbReference>
<dbReference type="HAMAP" id="MF_00795">
    <property type="entry name" value="CutC"/>
    <property type="match status" value="1"/>
</dbReference>
<dbReference type="InterPro" id="IPR005627">
    <property type="entry name" value="CutC-like"/>
</dbReference>
<dbReference type="InterPro" id="IPR036822">
    <property type="entry name" value="CutC-like_dom_sf"/>
</dbReference>
<dbReference type="PANTHER" id="PTHR12598">
    <property type="entry name" value="COPPER HOMEOSTASIS PROTEIN CUTC"/>
    <property type="match status" value="1"/>
</dbReference>
<dbReference type="PANTHER" id="PTHR12598:SF0">
    <property type="entry name" value="COPPER HOMEOSTASIS PROTEIN CUTC HOMOLOG"/>
    <property type="match status" value="1"/>
</dbReference>
<dbReference type="Pfam" id="PF03932">
    <property type="entry name" value="CutC"/>
    <property type="match status" value="1"/>
</dbReference>
<dbReference type="SUPFAM" id="SSF110395">
    <property type="entry name" value="CutC-like"/>
    <property type="match status" value="1"/>
</dbReference>